<feature type="chain" id="PRO_1000074612" description="Cysteine--tRNA ligase">
    <location>
        <begin position="1"/>
        <end position="461"/>
    </location>
</feature>
<feature type="short sequence motif" description="'HIGH' region">
    <location>
        <begin position="30"/>
        <end position="40"/>
    </location>
</feature>
<feature type="short sequence motif" description="'KMSKS' region">
    <location>
        <begin position="266"/>
        <end position="270"/>
    </location>
</feature>
<feature type="binding site" evidence="1">
    <location>
        <position position="28"/>
    </location>
    <ligand>
        <name>Zn(2+)</name>
        <dbReference type="ChEBI" id="CHEBI:29105"/>
    </ligand>
</feature>
<feature type="binding site" evidence="1">
    <location>
        <position position="209"/>
    </location>
    <ligand>
        <name>Zn(2+)</name>
        <dbReference type="ChEBI" id="CHEBI:29105"/>
    </ligand>
</feature>
<feature type="binding site" evidence="1">
    <location>
        <position position="234"/>
    </location>
    <ligand>
        <name>Zn(2+)</name>
        <dbReference type="ChEBI" id="CHEBI:29105"/>
    </ligand>
</feature>
<feature type="binding site" evidence="1">
    <location>
        <position position="238"/>
    </location>
    <ligand>
        <name>Zn(2+)</name>
        <dbReference type="ChEBI" id="CHEBI:29105"/>
    </ligand>
</feature>
<feature type="binding site" evidence="1">
    <location>
        <position position="269"/>
    </location>
    <ligand>
        <name>ATP</name>
        <dbReference type="ChEBI" id="CHEBI:30616"/>
    </ligand>
</feature>
<keyword id="KW-0030">Aminoacyl-tRNA synthetase</keyword>
<keyword id="KW-0067">ATP-binding</keyword>
<keyword id="KW-0963">Cytoplasm</keyword>
<keyword id="KW-0436">Ligase</keyword>
<keyword id="KW-0479">Metal-binding</keyword>
<keyword id="KW-0547">Nucleotide-binding</keyword>
<keyword id="KW-0648">Protein biosynthesis</keyword>
<keyword id="KW-0862">Zinc</keyword>
<accession>B1IZ75</accession>
<dbReference type="EC" id="6.1.1.16" evidence="1"/>
<dbReference type="EMBL" id="CP000946">
    <property type="protein sequence ID" value="ACA78720.1"/>
    <property type="molecule type" value="Genomic_DNA"/>
</dbReference>
<dbReference type="RefSeq" id="WP_000912345.1">
    <property type="nucleotide sequence ID" value="NZ_MTFT01000020.1"/>
</dbReference>
<dbReference type="SMR" id="B1IZ75"/>
<dbReference type="GeneID" id="75204392"/>
<dbReference type="KEGG" id="ecl:EcolC_3096"/>
<dbReference type="HOGENOM" id="CLU_013528_0_1_6"/>
<dbReference type="GO" id="GO:0005829">
    <property type="term" value="C:cytosol"/>
    <property type="evidence" value="ECO:0007669"/>
    <property type="project" value="TreeGrafter"/>
</dbReference>
<dbReference type="GO" id="GO:0005524">
    <property type="term" value="F:ATP binding"/>
    <property type="evidence" value="ECO:0007669"/>
    <property type="project" value="UniProtKB-UniRule"/>
</dbReference>
<dbReference type="GO" id="GO:0004817">
    <property type="term" value="F:cysteine-tRNA ligase activity"/>
    <property type="evidence" value="ECO:0007669"/>
    <property type="project" value="UniProtKB-UniRule"/>
</dbReference>
<dbReference type="GO" id="GO:0008270">
    <property type="term" value="F:zinc ion binding"/>
    <property type="evidence" value="ECO:0007669"/>
    <property type="project" value="UniProtKB-UniRule"/>
</dbReference>
<dbReference type="GO" id="GO:0006423">
    <property type="term" value="P:cysteinyl-tRNA aminoacylation"/>
    <property type="evidence" value="ECO:0007669"/>
    <property type="project" value="UniProtKB-UniRule"/>
</dbReference>
<dbReference type="CDD" id="cd07963">
    <property type="entry name" value="Anticodon_Ia_Cys"/>
    <property type="match status" value="1"/>
</dbReference>
<dbReference type="CDD" id="cd00672">
    <property type="entry name" value="CysRS_core"/>
    <property type="match status" value="1"/>
</dbReference>
<dbReference type="FunFam" id="1.20.120.1910:FF:000001">
    <property type="entry name" value="Cysteine--tRNA ligase"/>
    <property type="match status" value="1"/>
</dbReference>
<dbReference type="FunFam" id="3.40.50.620:FF:000009">
    <property type="entry name" value="Cysteine--tRNA ligase"/>
    <property type="match status" value="1"/>
</dbReference>
<dbReference type="Gene3D" id="1.20.120.1910">
    <property type="entry name" value="Cysteine-tRNA ligase, C-terminal anti-codon recognition domain"/>
    <property type="match status" value="1"/>
</dbReference>
<dbReference type="Gene3D" id="3.40.50.620">
    <property type="entry name" value="HUPs"/>
    <property type="match status" value="1"/>
</dbReference>
<dbReference type="HAMAP" id="MF_00041">
    <property type="entry name" value="Cys_tRNA_synth"/>
    <property type="match status" value="1"/>
</dbReference>
<dbReference type="InterPro" id="IPR015803">
    <property type="entry name" value="Cys-tRNA-ligase"/>
</dbReference>
<dbReference type="InterPro" id="IPR015273">
    <property type="entry name" value="Cys-tRNA-synt_Ia_DALR"/>
</dbReference>
<dbReference type="InterPro" id="IPR024909">
    <property type="entry name" value="Cys-tRNA/MSH_ligase"/>
</dbReference>
<dbReference type="InterPro" id="IPR056411">
    <property type="entry name" value="CysS_C"/>
</dbReference>
<dbReference type="InterPro" id="IPR014729">
    <property type="entry name" value="Rossmann-like_a/b/a_fold"/>
</dbReference>
<dbReference type="InterPro" id="IPR032678">
    <property type="entry name" value="tRNA-synt_1_cat_dom"/>
</dbReference>
<dbReference type="InterPro" id="IPR009080">
    <property type="entry name" value="tRNAsynth_Ia_anticodon-bd"/>
</dbReference>
<dbReference type="NCBIfam" id="TIGR00435">
    <property type="entry name" value="cysS"/>
    <property type="match status" value="1"/>
</dbReference>
<dbReference type="PANTHER" id="PTHR10890:SF3">
    <property type="entry name" value="CYSTEINE--TRNA LIGASE, CYTOPLASMIC"/>
    <property type="match status" value="1"/>
</dbReference>
<dbReference type="PANTHER" id="PTHR10890">
    <property type="entry name" value="CYSTEINYL-TRNA SYNTHETASE"/>
    <property type="match status" value="1"/>
</dbReference>
<dbReference type="Pfam" id="PF23493">
    <property type="entry name" value="CysS_C"/>
    <property type="match status" value="1"/>
</dbReference>
<dbReference type="Pfam" id="PF09190">
    <property type="entry name" value="DALR_2"/>
    <property type="match status" value="1"/>
</dbReference>
<dbReference type="Pfam" id="PF01406">
    <property type="entry name" value="tRNA-synt_1e"/>
    <property type="match status" value="1"/>
</dbReference>
<dbReference type="PRINTS" id="PR00983">
    <property type="entry name" value="TRNASYNTHCYS"/>
</dbReference>
<dbReference type="SMART" id="SM00840">
    <property type="entry name" value="DALR_2"/>
    <property type="match status" value="1"/>
</dbReference>
<dbReference type="SUPFAM" id="SSF47323">
    <property type="entry name" value="Anticodon-binding domain of a subclass of class I aminoacyl-tRNA synthetases"/>
    <property type="match status" value="1"/>
</dbReference>
<dbReference type="SUPFAM" id="SSF52374">
    <property type="entry name" value="Nucleotidylyl transferase"/>
    <property type="match status" value="1"/>
</dbReference>
<name>SYC_ECOLC</name>
<protein>
    <recommendedName>
        <fullName evidence="1">Cysteine--tRNA ligase</fullName>
        <ecNumber evidence="1">6.1.1.16</ecNumber>
    </recommendedName>
    <alternativeName>
        <fullName evidence="1">Cysteinyl-tRNA synthetase</fullName>
        <shortName evidence="1">CysRS</shortName>
    </alternativeName>
</protein>
<reference key="1">
    <citation type="submission" date="2008-02" db="EMBL/GenBank/DDBJ databases">
        <title>Complete sequence of Escherichia coli C str. ATCC 8739.</title>
        <authorList>
            <person name="Copeland A."/>
            <person name="Lucas S."/>
            <person name="Lapidus A."/>
            <person name="Glavina del Rio T."/>
            <person name="Dalin E."/>
            <person name="Tice H."/>
            <person name="Bruce D."/>
            <person name="Goodwin L."/>
            <person name="Pitluck S."/>
            <person name="Kiss H."/>
            <person name="Brettin T."/>
            <person name="Detter J.C."/>
            <person name="Han C."/>
            <person name="Kuske C.R."/>
            <person name="Schmutz J."/>
            <person name="Larimer F."/>
            <person name="Land M."/>
            <person name="Hauser L."/>
            <person name="Kyrpides N."/>
            <person name="Mikhailova N."/>
            <person name="Ingram L."/>
            <person name="Richardson P."/>
        </authorList>
    </citation>
    <scope>NUCLEOTIDE SEQUENCE [LARGE SCALE GENOMIC DNA]</scope>
    <source>
        <strain>ATCC 8739 / DSM 1576 / NBRC 3972 / NCIMB 8545 / WDCM 00012 / Crooks</strain>
    </source>
</reference>
<proteinExistence type="inferred from homology"/>
<organism>
    <name type="scientific">Escherichia coli (strain ATCC 8739 / DSM 1576 / NBRC 3972 / NCIMB 8545 / WDCM 00012 / Crooks)</name>
    <dbReference type="NCBI Taxonomy" id="481805"/>
    <lineage>
        <taxon>Bacteria</taxon>
        <taxon>Pseudomonadati</taxon>
        <taxon>Pseudomonadota</taxon>
        <taxon>Gammaproteobacteria</taxon>
        <taxon>Enterobacterales</taxon>
        <taxon>Enterobacteriaceae</taxon>
        <taxon>Escherichia</taxon>
    </lineage>
</organism>
<sequence>MLKIFNTLTRQKEEFKPIHAGEVGMYVCGITVYDLCHIGHGRTFVAFDVVARYLRFLGYKLKYVRNITDIDDKIIKRANENGESFVALVDRMIAEMHKDFDALNILRPDMEPRATHHIAEIIELTEQLIAKGHAYVADNGDVMFDVPTDPTYGVLSRQDLDQLQAGARVDVVDDKRNPMDFVLWKMSKEGEPSWPSPWGAGRPGWHIECSAMNCKQLGNHFDIHGGGSDLMFPHHENEIAQSTCAHDGQYVNYWMHSGMVMVDREKMSKSLGNFFTVRDVLKYYDAETVRYFLMSGHYRSQLNYSEENLKQARAALERLYTALRGTDKTVAPAGGEAFEARFIEAMDDDFNTPEAYSVLFDMAREVNRLKAEDMAAANAMASHLRKLSAVLGLLEQEPEAFLQSGAQADDSEVAEIEALIQQRLDARKAKDWAAADAARDRLNEMGIVLEDGPQGTTWRRK</sequence>
<evidence type="ECO:0000255" key="1">
    <source>
        <dbReference type="HAMAP-Rule" id="MF_00041"/>
    </source>
</evidence>
<gene>
    <name evidence="1" type="primary">cysS</name>
    <name type="ordered locus">EcolC_3096</name>
</gene>
<comment type="catalytic activity">
    <reaction evidence="1">
        <text>tRNA(Cys) + L-cysteine + ATP = L-cysteinyl-tRNA(Cys) + AMP + diphosphate</text>
        <dbReference type="Rhea" id="RHEA:17773"/>
        <dbReference type="Rhea" id="RHEA-COMP:9661"/>
        <dbReference type="Rhea" id="RHEA-COMP:9679"/>
        <dbReference type="ChEBI" id="CHEBI:30616"/>
        <dbReference type="ChEBI" id="CHEBI:33019"/>
        <dbReference type="ChEBI" id="CHEBI:35235"/>
        <dbReference type="ChEBI" id="CHEBI:78442"/>
        <dbReference type="ChEBI" id="CHEBI:78517"/>
        <dbReference type="ChEBI" id="CHEBI:456215"/>
        <dbReference type="EC" id="6.1.1.16"/>
    </reaction>
</comment>
<comment type="cofactor">
    <cofactor evidence="1">
        <name>Zn(2+)</name>
        <dbReference type="ChEBI" id="CHEBI:29105"/>
    </cofactor>
    <text evidence="1">Binds 1 zinc ion per subunit.</text>
</comment>
<comment type="subunit">
    <text evidence="1">Monomer.</text>
</comment>
<comment type="subcellular location">
    <subcellularLocation>
        <location evidence="1">Cytoplasm</location>
    </subcellularLocation>
</comment>
<comment type="similarity">
    <text evidence="1">Belongs to the class-I aminoacyl-tRNA synthetase family.</text>
</comment>